<feature type="chain" id="PRO_1000214668" description="Large ribosomal subunit protein uL18">
    <location>
        <begin position="1"/>
        <end position="122"/>
    </location>
</feature>
<gene>
    <name evidence="1" type="primary">rplR</name>
    <name type="ordered locus">HRM2_36100</name>
</gene>
<comment type="function">
    <text evidence="1">This is one of the proteins that bind and probably mediate the attachment of the 5S RNA into the large ribosomal subunit, where it forms part of the central protuberance.</text>
</comment>
<comment type="subunit">
    <text evidence="1">Part of the 50S ribosomal subunit; part of the 5S rRNA/L5/L18/L25 subcomplex. Contacts the 5S and 23S rRNAs.</text>
</comment>
<comment type="similarity">
    <text evidence="1">Belongs to the universal ribosomal protein uL18 family.</text>
</comment>
<organism>
    <name type="scientific">Desulforapulum autotrophicum (strain ATCC 43914 / DSM 3382 / VKM B-1955 / HRM2)</name>
    <name type="common">Desulfobacterium autotrophicum</name>
    <dbReference type="NCBI Taxonomy" id="177437"/>
    <lineage>
        <taxon>Bacteria</taxon>
        <taxon>Pseudomonadati</taxon>
        <taxon>Thermodesulfobacteriota</taxon>
        <taxon>Desulfobacteria</taxon>
        <taxon>Desulfobacterales</taxon>
        <taxon>Desulfobacteraceae</taxon>
        <taxon>Desulforapulum</taxon>
    </lineage>
</organism>
<reference key="1">
    <citation type="journal article" date="2009" name="Environ. Microbiol.">
        <title>Genome sequence of Desulfobacterium autotrophicum HRM2, a marine sulfate reducer oxidizing organic carbon completely to carbon dioxide.</title>
        <authorList>
            <person name="Strittmatter A.W."/>
            <person name="Liesegang H."/>
            <person name="Rabus R."/>
            <person name="Decker I."/>
            <person name="Amann J."/>
            <person name="Andres S."/>
            <person name="Henne A."/>
            <person name="Fricke W.F."/>
            <person name="Martinez-Arias R."/>
            <person name="Bartels D."/>
            <person name="Goesmann A."/>
            <person name="Krause L."/>
            <person name="Puehler A."/>
            <person name="Klenk H.P."/>
            <person name="Richter M."/>
            <person name="Schuler M."/>
            <person name="Gloeckner F.O."/>
            <person name="Meyerdierks A."/>
            <person name="Gottschalk G."/>
            <person name="Amann R."/>
        </authorList>
    </citation>
    <scope>NUCLEOTIDE SEQUENCE [LARGE SCALE GENOMIC DNA]</scope>
    <source>
        <strain>ATCC 43914 / DSM 3382 / VKM B-1955 / HRM2</strain>
    </source>
</reference>
<evidence type="ECO:0000255" key="1">
    <source>
        <dbReference type="HAMAP-Rule" id="MF_01337"/>
    </source>
</evidence>
<evidence type="ECO:0000305" key="2"/>
<protein>
    <recommendedName>
        <fullName evidence="1">Large ribosomal subunit protein uL18</fullName>
    </recommendedName>
    <alternativeName>
        <fullName evidence="2">50S ribosomal protein L18</fullName>
    </alternativeName>
</protein>
<dbReference type="EMBL" id="CP001087">
    <property type="protein sequence ID" value="ACN16675.1"/>
    <property type="molecule type" value="Genomic_DNA"/>
</dbReference>
<dbReference type="RefSeq" id="WP_015905425.1">
    <property type="nucleotide sequence ID" value="NC_012108.1"/>
</dbReference>
<dbReference type="SMR" id="C0Q9V7"/>
<dbReference type="STRING" id="177437.HRM2_36100"/>
<dbReference type="KEGG" id="dat:HRM2_36100"/>
<dbReference type="eggNOG" id="COG0256">
    <property type="taxonomic scope" value="Bacteria"/>
</dbReference>
<dbReference type="HOGENOM" id="CLU_098841_0_1_7"/>
<dbReference type="OrthoDB" id="9810939at2"/>
<dbReference type="Proteomes" id="UP000000442">
    <property type="component" value="Chromosome"/>
</dbReference>
<dbReference type="GO" id="GO:0022625">
    <property type="term" value="C:cytosolic large ribosomal subunit"/>
    <property type="evidence" value="ECO:0007669"/>
    <property type="project" value="TreeGrafter"/>
</dbReference>
<dbReference type="GO" id="GO:0008097">
    <property type="term" value="F:5S rRNA binding"/>
    <property type="evidence" value="ECO:0007669"/>
    <property type="project" value="TreeGrafter"/>
</dbReference>
<dbReference type="GO" id="GO:0003735">
    <property type="term" value="F:structural constituent of ribosome"/>
    <property type="evidence" value="ECO:0007669"/>
    <property type="project" value="InterPro"/>
</dbReference>
<dbReference type="GO" id="GO:0006412">
    <property type="term" value="P:translation"/>
    <property type="evidence" value="ECO:0007669"/>
    <property type="project" value="UniProtKB-UniRule"/>
</dbReference>
<dbReference type="CDD" id="cd00432">
    <property type="entry name" value="Ribosomal_L18_L5e"/>
    <property type="match status" value="1"/>
</dbReference>
<dbReference type="FunFam" id="3.30.420.100:FF:000001">
    <property type="entry name" value="50S ribosomal protein L18"/>
    <property type="match status" value="1"/>
</dbReference>
<dbReference type="Gene3D" id="3.30.420.100">
    <property type="match status" value="1"/>
</dbReference>
<dbReference type="HAMAP" id="MF_01337_B">
    <property type="entry name" value="Ribosomal_uL18_B"/>
    <property type="match status" value="1"/>
</dbReference>
<dbReference type="InterPro" id="IPR004389">
    <property type="entry name" value="Ribosomal_uL18_bac-type"/>
</dbReference>
<dbReference type="InterPro" id="IPR005484">
    <property type="entry name" value="Ribosomal_uL18_bac/euk"/>
</dbReference>
<dbReference type="NCBIfam" id="TIGR00060">
    <property type="entry name" value="L18_bact"/>
    <property type="match status" value="1"/>
</dbReference>
<dbReference type="PANTHER" id="PTHR12899">
    <property type="entry name" value="39S RIBOSOMAL PROTEIN L18, MITOCHONDRIAL"/>
    <property type="match status" value="1"/>
</dbReference>
<dbReference type="PANTHER" id="PTHR12899:SF3">
    <property type="entry name" value="LARGE RIBOSOMAL SUBUNIT PROTEIN UL18M"/>
    <property type="match status" value="1"/>
</dbReference>
<dbReference type="Pfam" id="PF00861">
    <property type="entry name" value="Ribosomal_L18p"/>
    <property type="match status" value="1"/>
</dbReference>
<dbReference type="SUPFAM" id="SSF53137">
    <property type="entry name" value="Translational machinery components"/>
    <property type="match status" value="1"/>
</dbReference>
<proteinExistence type="inferred from homology"/>
<keyword id="KW-1185">Reference proteome</keyword>
<keyword id="KW-0687">Ribonucleoprotein</keyword>
<keyword id="KW-0689">Ribosomal protein</keyword>
<keyword id="KW-0694">RNA-binding</keyword>
<keyword id="KW-0699">rRNA-binding</keyword>
<name>RL18_DESAH</name>
<accession>C0Q9V7</accession>
<sequence length="122" mass="13402">MANKSTRLVSRLKRQKRIRKRITGTGERPRLCVFRSSAHIYAQVIDDVTGSTLAAASTLDKEFIENKDKLVGKDAATAIGRLVGARALEKGISKVVFDRNGFLYHGRVKALSDGAREAGLNF</sequence>